<dbReference type="EMBL" id="AM933172">
    <property type="protein sequence ID" value="CAR33901.1"/>
    <property type="molecule type" value="Genomic_DNA"/>
</dbReference>
<dbReference type="RefSeq" id="WP_000426135.1">
    <property type="nucleotide sequence ID" value="NC_011294.1"/>
</dbReference>
<dbReference type="SMR" id="B5R316"/>
<dbReference type="KEGG" id="set:SEN2317"/>
<dbReference type="HOGENOM" id="CLU_101021_1_0_6"/>
<dbReference type="Proteomes" id="UP000000613">
    <property type="component" value="Chromosome"/>
</dbReference>
<dbReference type="FunFam" id="1.10.3190.10:FF:000001">
    <property type="entry name" value="UPF0304 protein YfbU"/>
    <property type="match status" value="1"/>
</dbReference>
<dbReference type="Gene3D" id="1.10.287.680">
    <property type="entry name" value="Helix hairpin bin"/>
    <property type="match status" value="1"/>
</dbReference>
<dbReference type="Gene3D" id="1.10.3190.10">
    <property type="entry name" value="yfbu gene product, domain 2"/>
    <property type="match status" value="1"/>
</dbReference>
<dbReference type="HAMAP" id="MF_00762">
    <property type="entry name" value="UPF0304"/>
    <property type="match status" value="1"/>
</dbReference>
<dbReference type="InterPro" id="IPR005587">
    <property type="entry name" value="UPF0304_YfbU"/>
</dbReference>
<dbReference type="InterPro" id="IPR023146">
    <property type="entry name" value="YfbU_alpha-helical_sf"/>
</dbReference>
<dbReference type="InterPro" id="IPR023145">
    <property type="entry name" value="YfbU_helix-hairpin_sf"/>
</dbReference>
<dbReference type="NCBIfam" id="NF003936">
    <property type="entry name" value="PRK05445.1"/>
    <property type="match status" value="1"/>
</dbReference>
<dbReference type="Pfam" id="PF03887">
    <property type="entry name" value="YfbU"/>
    <property type="match status" value="1"/>
</dbReference>
<dbReference type="PIRSF" id="PIRSF006272">
    <property type="entry name" value="UCP006272"/>
    <property type="match status" value="1"/>
</dbReference>
<dbReference type="SUPFAM" id="SSF116960">
    <property type="entry name" value="YfbU-like"/>
    <property type="match status" value="1"/>
</dbReference>
<evidence type="ECO:0000255" key="1">
    <source>
        <dbReference type="HAMAP-Rule" id="MF_00762"/>
    </source>
</evidence>
<protein>
    <recommendedName>
        <fullName evidence="1">UPF0304 protein YfbU</fullName>
    </recommendedName>
</protein>
<accession>B5R316</accession>
<name>YFBU_SALEP</name>
<comment type="similarity">
    <text evidence="1">Belongs to the UPF0304 family.</text>
</comment>
<feature type="chain" id="PRO_1000198343" description="UPF0304 protein YfbU">
    <location>
        <begin position="1"/>
        <end position="164"/>
    </location>
</feature>
<organism>
    <name type="scientific">Salmonella enteritidis PT4 (strain P125109)</name>
    <dbReference type="NCBI Taxonomy" id="550537"/>
    <lineage>
        <taxon>Bacteria</taxon>
        <taxon>Pseudomonadati</taxon>
        <taxon>Pseudomonadota</taxon>
        <taxon>Gammaproteobacteria</taxon>
        <taxon>Enterobacterales</taxon>
        <taxon>Enterobacteriaceae</taxon>
        <taxon>Salmonella</taxon>
    </lineage>
</organism>
<reference key="1">
    <citation type="journal article" date="2008" name="Genome Res.">
        <title>Comparative genome analysis of Salmonella enteritidis PT4 and Salmonella gallinarum 287/91 provides insights into evolutionary and host adaptation pathways.</title>
        <authorList>
            <person name="Thomson N.R."/>
            <person name="Clayton D.J."/>
            <person name="Windhorst D."/>
            <person name="Vernikos G."/>
            <person name="Davidson S."/>
            <person name="Churcher C."/>
            <person name="Quail M.A."/>
            <person name="Stevens M."/>
            <person name="Jones M.A."/>
            <person name="Watson M."/>
            <person name="Barron A."/>
            <person name="Layton A."/>
            <person name="Pickard D."/>
            <person name="Kingsley R.A."/>
            <person name="Bignell A."/>
            <person name="Clark L."/>
            <person name="Harris B."/>
            <person name="Ormond D."/>
            <person name="Abdellah Z."/>
            <person name="Brooks K."/>
            <person name="Cherevach I."/>
            <person name="Chillingworth T."/>
            <person name="Woodward J."/>
            <person name="Norberczak H."/>
            <person name="Lord A."/>
            <person name="Arrowsmith C."/>
            <person name="Jagels K."/>
            <person name="Moule S."/>
            <person name="Mungall K."/>
            <person name="Saunders M."/>
            <person name="Whitehead S."/>
            <person name="Chabalgoity J.A."/>
            <person name="Maskell D."/>
            <person name="Humphreys T."/>
            <person name="Roberts M."/>
            <person name="Barrow P.A."/>
            <person name="Dougan G."/>
            <person name="Parkhill J."/>
        </authorList>
    </citation>
    <scope>NUCLEOTIDE SEQUENCE [LARGE SCALE GENOMIC DNA]</scope>
    <source>
        <strain>P125109</strain>
    </source>
</reference>
<sequence length="164" mass="19524">MEMTNAQRLILSNQYKMMTMLDPTNAERYRRLQTIIERGYGLQMRELDREFGELTEETCRTIIDIMEMYHALHVSWTNLKDTQAIDERRVTFLGFDAATEARYLGYVRFMVNIEGRYTHFDAGTHGFNAQTPMWEKYQRMLNVWHACPRQYHLSANEINQIINA</sequence>
<proteinExistence type="inferred from homology"/>
<gene>
    <name evidence="1" type="primary">yfbU</name>
    <name type="ordered locus">SEN2317</name>
</gene>